<name>MNMC_BURCH</name>
<sequence length="643" mass="68643">MPDRLVSATLALRDDGTLVSPEFGELHRGASGTLARAHRTFVAGNGLPARWQRRRTFTIVTTAFGAGAGFLAAWAAWRDDPARCERLHVVAVEPHPFSRDDLHRAVSHMVVDTTISADVDALLDAWPILVPGLHRLEFDEGRVVLTLAFGDTIDLLKKLVARADAFFLDGAAASGDGIRALAKLAGEHATFATHAKSDDVKHALGETGFTFREVDDRLVGDYAPRWRARRHEPPRALPVAARRAIVIGAGLAGCAVVERLAARGWDVTLIERHERIASEASGNPAGVFHPLMTRDDNVASRLTRGGFLHALARWRALERAGHAFSRSTHGMLHLAESADDFARMRDAFDAFGPPSDYATLLDADAARAHLNLPVAQGGLLFPHGGAVWPAGLCVAQYAAAGERVRLLASTCVARLERRDDTWHALDDTGATLADAPVVVLANAGDAARLAGLRHVTLQPVRGQLTLLPPGTTAPLPCPAIGDGYAVPLDDGTLLIGATFEPDDTDPAMRAAGHAENLDRVRHLLPGLIGALPDPATLRGRVAFRWVVGDRLPLIGPLADETQATANARALGGAQARDLPRMPGLYGAFGFGSRGLVWAALGAELIASQLEGEPWPLERELADAVDPARFLIRALRARRVGSAG</sequence>
<keyword id="KW-0963">Cytoplasm</keyword>
<keyword id="KW-0274">FAD</keyword>
<keyword id="KW-0285">Flavoprotein</keyword>
<keyword id="KW-0489">Methyltransferase</keyword>
<keyword id="KW-0511">Multifunctional enzyme</keyword>
<keyword id="KW-0560">Oxidoreductase</keyword>
<keyword id="KW-0949">S-adenosyl-L-methionine</keyword>
<keyword id="KW-0808">Transferase</keyword>
<keyword id="KW-0819">tRNA processing</keyword>
<comment type="function">
    <text evidence="1">Catalyzes the last two steps in the biosynthesis of 5-methylaminomethyl-2-thiouridine (mnm(5)s(2)U) at the wobble position (U34) in tRNA. Catalyzes the FAD-dependent demodification of cmnm(5)s(2)U34 to nm(5)s(2)U34, followed by the transfer of a methyl group from S-adenosyl-L-methionine to nm(5)s(2)U34, to form mnm(5)s(2)U34.</text>
</comment>
<comment type="catalytic activity">
    <reaction evidence="1">
        <text>5-aminomethyl-2-thiouridine(34) in tRNA + S-adenosyl-L-methionine = 5-methylaminomethyl-2-thiouridine(34) in tRNA + S-adenosyl-L-homocysteine + H(+)</text>
        <dbReference type="Rhea" id="RHEA:19569"/>
        <dbReference type="Rhea" id="RHEA-COMP:10195"/>
        <dbReference type="Rhea" id="RHEA-COMP:10197"/>
        <dbReference type="ChEBI" id="CHEBI:15378"/>
        <dbReference type="ChEBI" id="CHEBI:57856"/>
        <dbReference type="ChEBI" id="CHEBI:59789"/>
        <dbReference type="ChEBI" id="CHEBI:74454"/>
        <dbReference type="ChEBI" id="CHEBI:74455"/>
        <dbReference type="EC" id="2.1.1.61"/>
    </reaction>
</comment>
<comment type="cofactor">
    <cofactor evidence="1">
        <name>FAD</name>
        <dbReference type="ChEBI" id="CHEBI:57692"/>
    </cofactor>
</comment>
<comment type="subcellular location">
    <subcellularLocation>
        <location evidence="1">Cytoplasm</location>
    </subcellularLocation>
</comment>
<comment type="similarity">
    <text evidence="1">In the N-terminal section; belongs to the methyltransferase superfamily. tRNA (mnm(5)s(2)U34)-methyltransferase family.</text>
</comment>
<comment type="similarity">
    <text evidence="1">In the C-terminal section; belongs to the DAO family.</text>
</comment>
<protein>
    <recommendedName>
        <fullName evidence="1">tRNA 5-methylaminomethyl-2-thiouridine biosynthesis bifunctional protein MnmC</fullName>
        <shortName evidence="1">tRNA mnm(5)s(2)U biosynthesis bifunctional protein</shortName>
    </recommendedName>
    <domain>
        <recommendedName>
            <fullName evidence="1">tRNA (mnm(5)s(2)U34)-methyltransferase</fullName>
            <ecNumber evidence="1">2.1.1.61</ecNumber>
        </recommendedName>
    </domain>
    <domain>
        <recommendedName>
            <fullName evidence="1">FAD-dependent cmnm(5)s(2)U34 oxidoreductase</fullName>
            <ecNumber evidence="1">1.5.-.-</ecNumber>
        </recommendedName>
    </domain>
</protein>
<organism>
    <name type="scientific">Burkholderia cenocepacia (strain HI2424)</name>
    <dbReference type="NCBI Taxonomy" id="331272"/>
    <lineage>
        <taxon>Bacteria</taxon>
        <taxon>Pseudomonadati</taxon>
        <taxon>Pseudomonadota</taxon>
        <taxon>Betaproteobacteria</taxon>
        <taxon>Burkholderiales</taxon>
        <taxon>Burkholderiaceae</taxon>
        <taxon>Burkholderia</taxon>
        <taxon>Burkholderia cepacia complex</taxon>
    </lineage>
</organism>
<proteinExistence type="inferred from homology"/>
<gene>
    <name evidence="1" type="primary">mnmC</name>
    <name type="ordered locus">Bcen2424_0066</name>
</gene>
<accession>A0K2U3</accession>
<reference key="1">
    <citation type="submission" date="2006-08" db="EMBL/GenBank/DDBJ databases">
        <title>Complete sequence of chromosome 1 of Burkholderia cenocepacia HI2424.</title>
        <authorList>
            <person name="Copeland A."/>
            <person name="Lucas S."/>
            <person name="Lapidus A."/>
            <person name="Barry K."/>
            <person name="Detter J.C."/>
            <person name="Glavina del Rio T."/>
            <person name="Hammon N."/>
            <person name="Israni S."/>
            <person name="Pitluck S."/>
            <person name="Chain P."/>
            <person name="Malfatti S."/>
            <person name="Shin M."/>
            <person name="Vergez L."/>
            <person name="Schmutz J."/>
            <person name="Larimer F."/>
            <person name="Land M."/>
            <person name="Hauser L."/>
            <person name="Kyrpides N."/>
            <person name="Kim E."/>
            <person name="LiPuma J.J."/>
            <person name="Gonzalez C.F."/>
            <person name="Konstantinidis K."/>
            <person name="Tiedje J.M."/>
            <person name="Richardson P."/>
        </authorList>
    </citation>
    <scope>NUCLEOTIDE SEQUENCE [LARGE SCALE GENOMIC DNA]</scope>
    <source>
        <strain>HI2424</strain>
    </source>
</reference>
<feature type="chain" id="PRO_0000347950" description="tRNA 5-methylaminomethyl-2-thiouridine biosynthesis bifunctional protein MnmC">
    <location>
        <begin position="1"/>
        <end position="643"/>
    </location>
</feature>
<feature type="region of interest" description="tRNA (mnm(5)s(2)U34)-methyltransferase">
    <location>
        <begin position="1"/>
        <end position="223"/>
    </location>
</feature>
<feature type="region of interest" description="FAD-dependent cmnm(5)s(2)U34 oxidoreductase">
    <location>
        <begin position="247"/>
        <end position="643"/>
    </location>
</feature>
<evidence type="ECO:0000255" key="1">
    <source>
        <dbReference type="HAMAP-Rule" id="MF_01102"/>
    </source>
</evidence>
<dbReference type="EC" id="2.1.1.61" evidence="1"/>
<dbReference type="EC" id="1.5.-.-" evidence="1"/>
<dbReference type="EMBL" id="CP000458">
    <property type="protein sequence ID" value="ABK06820.1"/>
    <property type="molecule type" value="Genomic_DNA"/>
</dbReference>
<dbReference type="RefSeq" id="WP_011694013.1">
    <property type="nucleotide sequence ID" value="NC_008542.1"/>
</dbReference>
<dbReference type="SMR" id="A0K2U3"/>
<dbReference type="KEGG" id="bch:Bcen2424_0066"/>
<dbReference type="HOGENOM" id="CLU_022427_1_0_4"/>
<dbReference type="GO" id="GO:0005737">
    <property type="term" value="C:cytoplasm"/>
    <property type="evidence" value="ECO:0007669"/>
    <property type="project" value="UniProtKB-SubCell"/>
</dbReference>
<dbReference type="GO" id="GO:0050660">
    <property type="term" value="F:flavin adenine dinucleotide binding"/>
    <property type="evidence" value="ECO:0007669"/>
    <property type="project" value="UniProtKB-UniRule"/>
</dbReference>
<dbReference type="GO" id="GO:0016645">
    <property type="term" value="F:oxidoreductase activity, acting on the CH-NH group of donors"/>
    <property type="evidence" value="ECO:0007669"/>
    <property type="project" value="InterPro"/>
</dbReference>
<dbReference type="GO" id="GO:0004808">
    <property type="term" value="F:tRNA (5-methylaminomethyl-2-thiouridylate)(34)-methyltransferase activity"/>
    <property type="evidence" value="ECO:0007669"/>
    <property type="project" value="UniProtKB-EC"/>
</dbReference>
<dbReference type="GO" id="GO:0032259">
    <property type="term" value="P:methylation"/>
    <property type="evidence" value="ECO:0007669"/>
    <property type="project" value="UniProtKB-KW"/>
</dbReference>
<dbReference type="GO" id="GO:0002097">
    <property type="term" value="P:tRNA wobble base modification"/>
    <property type="evidence" value="ECO:0007669"/>
    <property type="project" value="UniProtKB-UniRule"/>
</dbReference>
<dbReference type="Gene3D" id="3.30.9.10">
    <property type="entry name" value="D-Amino Acid Oxidase, subunit A, domain 2"/>
    <property type="match status" value="1"/>
</dbReference>
<dbReference type="Gene3D" id="3.50.50.60">
    <property type="entry name" value="FAD/NAD(P)-binding domain"/>
    <property type="match status" value="1"/>
</dbReference>
<dbReference type="Gene3D" id="3.40.50.150">
    <property type="entry name" value="Vaccinia Virus protein VP39"/>
    <property type="match status" value="1"/>
</dbReference>
<dbReference type="HAMAP" id="MF_01102">
    <property type="entry name" value="MnmC"/>
    <property type="match status" value="1"/>
</dbReference>
<dbReference type="InterPro" id="IPR006076">
    <property type="entry name" value="FAD-dep_OxRdtase"/>
</dbReference>
<dbReference type="InterPro" id="IPR036188">
    <property type="entry name" value="FAD/NAD-bd_sf"/>
</dbReference>
<dbReference type="InterPro" id="IPR008471">
    <property type="entry name" value="MnmC-like_methylTransf"/>
</dbReference>
<dbReference type="InterPro" id="IPR029063">
    <property type="entry name" value="SAM-dependent_MTases_sf"/>
</dbReference>
<dbReference type="InterPro" id="IPR023032">
    <property type="entry name" value="tRNA_MAMT_biosynth_bifunc_MnmC"/>
</dbReference>
<dbReference type="InterPro" id="IPR017610">
    <property type="entry name" value="tRNA_S-uridine_synth_MnmC_C"/>
</dbReference>
<dbReference type="NCBIfam" id="TIGR03197">
    <property type="entry name" value="MnmC_Cterm"/>
    <property type="match status" value="1"/>
</dbReference>
<dbReference type="NCBIfam" id="NF002483">
    <property type="entry name" value="PRK01747.1-4"/>
    <property type="match status" value="1"/>
</dbReference>
<dbReference type="PANTHER" id="PTHR13847">
    <property type="entry name" value="SARCOSINE DEHYDROGENASE-RELATED"/>
    <property type="match status" value="1"/>
</dbReference>
<dbReference type="PANTHER" id="PTHR13847:SF283">
    <property type="entry name" value="TRNA 5-METHYLAMINOMETHYL-2-THIOURIDINE BIOSYNTHESIS BIFUNCTIONAL PROTEIN MNMC"/>
    <property type="match status" value="1"/>
</dbReference>
<dbReference type="Pfam" id="PF01266">
    <property type="entry name" value="DAO"/>
    <property type="match status" value="1"/>
</dbReference>
<dbReference type="Pfam" id="PF05430">
    <property type="entry name" value="Methyltransf_30"/>
    <property type="match status" value="1"/>
</dbReference>
<dbReference type="SUPFAM" id="SSF54373">
    <property type="entry name" value="FAD-linked reductases, C-terminal domain"/>
    <property type="match status" value="1"/>
</dbReference>
<dbReference type="SUPFAM" id="SSF51905">
    <property type="entry name" value="FAD/NAD(P)-binding domain"/>
    <property type="match status" value="1"/>
</dbReference>